<proteinExistence type="inferred from homology"/>
<accession>B7HE15</accession>
<feature type="chain" id="PRO_1000129066" description="Uridine kinase">
    <location>
        <begin position="1"/>
        <end position="212"/>
    </location>
</feature>
<feature type="binding site" evidence="1">
    <location>
        <begin position="13"/>
        <end position="20"/>
    </location>
    <ligand>
        <name>ATP</name>
        <dbReference type="ChEBI" id="CHEBI:30616"/>
    </ligand>
</feature>
<comment type="catalytic activity">
    <reaction evidence="1">
        <text>uridine + ATP = UMP + ADP + H(+)</text>
        <dbReference type="Rhea" id="RHEA:16825"/>
        <dbReference type="ChEBI" id="CHEBI:15378"/>
        <dbReference type="ChEBI" id="CHEBI:16704"/>
        <dbReference type="ChEBI" id="CHEBI:30616"/>
        <dbReference type="ChEBI" id="CHEBI:57865"/>
        <dbReference type="ChEBI" id="CHEBI:456216"/>
        <dbReference type="EC" id="2.7.1.48"/>
    </reaction>
</comment>
<comment type="catalytic activity">
    <reaction evidence="1">
        <text>cytidine + ATP = CMP + ADP + H(+)</text>
        <dbReference type="Rhea" id="RHEA:24674"/>
        <dbReference type="ChEBI" id="CHEBI:15378"/>
        <dbReference type="ChEBI" id="CHEBI:17562"/>
        <dbReference type="ChEBI" id="CHEBI:30616"/>
        <dbReference type="ChEBI" id="CHEBI:60377"/>
        <dbReference type="ChEBI" id="CHEBI:456216"/>
        <dbReference type="EC" id="2.7.1.48"/>
    </reaction>
</comment>
<comment type="pathway">
    <text evidence="1">Pyrimidine metabolism; CTP biosynthesis via salvage pathway; CTP from cytidine: step 1/3.</text>
</comment>
<comment type="pathway">
    <text evidence="1">Pyrimidine metabolism; UMP biosynthesis via salvage pathway; UMP from uridine: step 1/1.</text>
</comment>
<comment type="subcellular location">
    <subcellularLocation>
        <location evidence="1">Cytoplasm</location>
    </subcellularLocation>
</comment>
<comment type="similarity">
    <text evidence="1">Belongs to the uridine kinase family.</text>
</comment>
<gene>
    <name evidence="1" type="primary">udk</name>
    <name type="ordered locus">BCB4264_A4500</name>
</gene>
<reference key="1">
    <citation type="submission" date="2008-10" db="EMBL/GenBank/DDBJ databases">
        <title>Genome sequence of Bacillus cereus B4264.</title>
        <authorList>
            <person name="Dodson R.J."/>
            <person name="Durkin A.S."/>
            <person name="Rosovitz M.J."/>
            <person name="Rasko D.A."/>
            <person name="Hoffmaster A."/>
            <person name="Ravel J."/>
            <person name="Sutton G."/>
        </authorList>
    </citation>
    <scope>NUCLEOTIDE SEQUENCE [LARGE SCALE GENOMIC DNA]</scope>
    <source>
        <strain>B4264</strain>
    </source>
</reference>
<name>URK_BACC4</name>
<organism>
    <name type="scientific">Bacillus cereus (strain B4264)</name>
    <dbReference type="NCBI Taxonomy" id="405532"/>
    <lineage>
        <taxon>Bacteria</taxon>
        <taxon>Bacillati</taxon>
        <taxon>Bacillota</taxon>
        <taxon>Bacilli</taxon>
        <taxon>Bacillales</taxon>
        <taxon>Bacillaceae</taxon>
        <taxon>Bacillus</taxon>
        <taxon>Bacillus cereus group</taxon>
    </lineage>
</organism>
<dbReference type="EC" id="2.7.1.48" evidence="1"/>
<dbReference type="EMBL" id="CP001176">
    <property type="protein sequence ID" value="ACK60163.1"/>
    <property type="molecule type" value="Genomic_DNA"/>
</dbReference>
<dbReference type="RefSeq" id="WP_000537078.1">
    <property type="nucleotide sequence ID" value="NZ_VEHB01000006.1"/>
</dbReference>
<dbReference type="SMR" id="B7HE15"/>
<dbReference type="GeneID" id="93006721"/>
<dbReference type="KEGG" id="bcb:BCB4264_A4500"/>
<dbReference type="HOGENOM" id="CLU_021278_1_2_9"/>
<dbReference type="UniPathway" id="UPA00574">
    <property type="reaction ID" value="UER00637"/>
</dbReference>
<dbReference type="UniPathway" id="UPA00579">
    <property type="reaction ID" value="UER00640"/>
</dbReference>
<dbReference type="Proteomes" id="UP000007096">
    <property type="component" value="Chromosome"/>
</dbReference>
<dbReference type="GO" id="GO:0005737">
    <property type="term" value="C:cytoplasm"/>
    <property type="evidence" value="ECO:0007669"/>
    <property type="project" value="UniProtKB-SubCell"/>
</dbReference>
<dbReference type="GO" id="GO:0005524">
    <property type="term" value="F:ATP binding"/>
    <property type="evidence" value="ECO:0007669"/>
    <property type="project" value="UniProtKB-UniRule"/>
</dbReference>
<dbReference type="GO" id="GO:0043771">
    <property type="term" value="F:cytidine kinase activity"/>
    <property type="evidence" value="ECO:0007669"/>
    <property type="project" value="RHEA"/>
</dbReference>
<dbReference type="GO" id="GO:0004849">
    <property type="term" value="F:uridine kinase activity"/>
    <property type="evidence" value="ECO:0007669"/>
    <property type="project" value="UniProtKB-UniRule"/>
</dbReference>
<dbReference type="GO" id="GO:0044211">
    <property type="term" value="P:CTP salvage"/>
    <property type="evidence" value="ECO:0007669"/>
    <property type="project" value="UniProtKB-UniRule"/>
</dbReference>
<dbReference type="GO" id="GO:0044206">
    <property type="term" value="P:UMP salvage"/>
    <property type="evidence" value="ECO:0007669"/>
    <property type="project" value="UniProtKB-UniRule"/>
</dbReference>
<dbReference type="CDD" id="cd02023">
    <property type="entry name" value="UMPK"/>
    <property type="match status" value="1"/>
</dbReference>
<dbReference type="Gene3D" id="3.40.50.300">
    <property type="entry name" value="P-loop containing nucleotide triphosphate hydrolases"/>
    <property type="match status" value="1"/>
</dbReference>
<dbReference type="HAMAP" id="MF_00551">
    <property type="entry name" value="Uridine_kinase"/>
    <property type="match status" value="1"/>
</dbReference>
<dbReference type="InterPro" id="IPR027417">
    <property type="entry name" value="P-loop_NTPase"/>
</dbReference>
<dbReference type="InterPro" id="IPR006083">
    <property type="entry name" value="PRK/URK"/>
</dbReference>
<dbReference type="InterPro" id="IPR026008">
    <property type="entry name" value="Uridine_kinase"/>
</dbReference>
<dbReference type="InterPro" id="IPR000764">
    <property type="entry name" value="Uridine_kinase-like"/>
</dbReference>
<dbReference type="NCBIfam" id="NF004018">
    <property type="entry name" value="PRK05480.1"/>
    <property type="match status" value="1"/>
</dbReference>
<dbReference type="NCBIfam" id="TIGR00235">
    <property type="entry name" value="udk"/>
    <property type="match status" value="1"/>
</dbReference>
<dbReference type="PANTHER" id="PTHR10285">
    <property type="entry name" value="URIDINE KINASE"/>
    <property type="match status" value="1"/>
</dbReference>
<dbReference type="Pfam" id="PF00485">
    <property type="entry name" value="PRK"/>
    <property type="match status" value="1"/>
</dbReference>
<dbReference type="PRINTS" id="PR00988">
    <property type="entry name" value="URIDINKINASE"/>
</dbReference>
<dbReference type="SUPFAM" id="SSF52540">
    <property type="entry name" value="P-loop containing nucleoside triphosphate hydrolases"/>
    <property type="match status" value="1"/>
</dbReference>
<protein>
    <recommendedName>
        <fullName evidence="1">Uridine kinase</fullName>
        <ecNumber evidence="1">2.7.1.48</ecNumber>
    </recommendedName>
    <alternativeName>
        <fullName evidence="1">Cytidine monophosphokinase</fullName>
    </alternativeName>
    <alternativeName>
        <fullName evidence="1">Uridine monophosphokinase</fullName>
    </alternativeName>
</protein>
<evidence type="ECO:0000255" key="1">
    <source>
        <dbReference type="HAMAP-Rule" id="MF_00551"/>
    </source>
</evidence>
<sequence length="212" mass="24353">MGTNKPVVIGIAGGSGSGKTSVTKAIFDHFKGHSILILEQDYYYKDQSHLPMEERLKTNYDHPLAFDNDLLIEHLQQLLAYEQIDKPVYDYTLHTRSEEIIPVEPKDVIILEGILILEDPRLCELMDIKLFVDTDADLRILRRMQRDIKERGRTMDSVIDQYVNVVRPMHNQFIEPSKKFADIIIPEGGQNHVAIDIMVTKIATILEQKVNL</sequence>
<keyword id="KW-0067">ATP-binding</keyword>
<keyword id="KW-0963">Cytoplasm</keyword>
<keyword id="KW-0418">Kinase</keyword>
<keyword id="KW-0547">Nucleotide-binding</keyword>
<keyword id="KW-0808">Transferase</keyword>